<proteinExistence type="inferred from homology"/>
<gene>
    <name type="ordered locus">SCO1794</name>
    <name type="ORF">SCI5.02</name>
</gene>
<protein>
    <recommendedName>
        <fullName>UPF0098 protein SCO1794</fullName>
    </recommendedName>
</protein>
<sequence>MTELKRRPLPHDFHPPVPSFTVTSEDVPEGGTLKDDQVHAAGNTSPHLRWEGFPAETKSFAVTCYDPDAPTGSGFWHWVVFDIPASVTELPVGAGSGAFEGLPQGAVQARNDYGSKGFGGAAPPPGDGPHRYVFTVYAVDQEKLGPDADGTPAFVGFNLRFHTIARAHLISEYEVPADS</sequence>
<feature type="chain" id="PRO_0000137911" description="UPF0098 protein SCO1794">
    <location>
        <begin position="1"/>
        <end position="179"/>
    </location>
</feature>
<feature type="region of interest" description="Disordered" evidence="1">
    <location>
        <begin position="1"/>
        <end position="31"/>
    </location>
</feature>
<feature type="compositionally biased region" description="Basic and acidic residues" evidence="1">
    <location>
        <begin position="1"/>
        <end position="14"/>
    </location>
</feature>
<keyword id="KW-1185">Reference proteome</keyword>
<comment type="similarity">
    <text evidence="2">Belongs to the UPF0098 family.</text>
</comment>
<organism>
    <name type="scientific">Streptomyces coelicolor (strain ATCC BAA-471 / A3(2) / M145)</name>
    <dbReference type="NCBI Taxonomy" id="100226"/>
    <lineage>
        <taxon>Bacteria</taxon>
        <taxon>Bacillati</taxon>
        <taxon>Actinomycetota</taxon>
        <taxon>Actinomycetes</taxon>
        <taxon>Kitasatosporales</taxon>
        <taxon>Streptomycetaceae</taxon>
        <taxon>Streptomyces</taxon>
        <taxon>Streptomyces albidoflavus group</taxon>
    </lineage>
</organism>
<dbReference type="EMBL" id="AL939110">
    <property type="protein sequence ID" value="CAB45286.1"/>
    <property type="molecule type" value="Genomic_DNA"/>
</dbReference>
<dbReference type="PIR" id="T36855">
    <property type="entry name" value="T36855"/>
</dbReference>
<dbReference type="RefSeq" id="NP_626064.1">
    <property type="nucleotide sequence ID" value="NC_003888.3"/>
</dbReference>
<dbReference type="RefSeq" id="WP_003977028.1">
    <property type="nucleotide sequence ID" value="NZ_VNID01000001.1"/>
</dbReference>
<dbReference type="SMR" id="Q9X9Z8"/>
<dbReference type="STRING" id="100226.gene:17759391"/>
<dbReference type="PaxDb" id="100226-SCO1794"/>
<dbReference type="KEGG" id="sco:SCO1794"/>
<dbReference type="PATRIC" id="fig|100226.15.peg.1815"/>
<dbReference type="eggNOG" id="COG1881">
    <property type="taxonomic scope" value="Bacteria"/>
</dbReference>
<dbReference type="HOGENOM" id="CLU_083918_2_1_11"/>
<dbReference type="InParanoid" id="Q9X9Z8"/>
<dbReference type="OrthoDB" id="9797506at2"/>
<dbReference type="PhylomeDB" id="Q9X9Z8"/>
<dbReference type="Proteomes" id="UP000001973">
    <property type="component" value="Chromosome"/>
</dbReference>
<dbReference type="CDD" id="cd00865">
    <property type="entry name" value="PEBP_bact_arch"/>
    <property type="match status" value="1"/>
</dbReference>
<dbReference type="Gene3D" id="3.90.280.10">
    <property type="entry name" value="PEBP-like"/>
    <property type="match status" value="1"/>
</dbReference>
<dbReference type="InterPro" id="IPR008914">
    <property type="entry name" value="PEBP"/>
</dbReference>
<dbReference type="InterPro" id="IPR036610">
    <property type="entry name" value="PEBP-like_sf"/>
</dbReference>
<dbReference type="InterPro" id="IPR005247">
    <property type="entry name" value="YbhB_YbcL/LppC-like"/>
</dbReference>
<dbReference type="NCBIfam" id="TIGR00481">
    <property type="entry name" value="YbhB/YbcL family Raf kinase inhibitor-like protein"/>
    <property type="match status" value="1"/>
</dbReference>
<dbReference type="PANTHER" id="PTHR30289:SF1">
    <property type="entry name" value="PEBP (PHOSPHATIDYLETHANOLAMINE-BINDING PROTEIN) FAMILY PROTEIN"/>
    <property type="match status" value="1"/>
</dbReference>
<dbReference type="PANTHER" id="PTHR30289">
    <property type="entry name" value="UNCHARACTERIZED PROTEIN YBCL-RELATED"/>
    <property type="match status" value="1"/>
</dbReference>
<dbReference type="Pfam" id="PF01161">
    <property type="entry name" value="PBP"/>
    <property type="match status" value="1"/>
</dbReference>
<dbReference type="SUPFAM" id="SSF49777">
    <property type="entry name" value="PEBP-like"/>
    <property type="match status" value="1"/>
</dbReference>
<accession>Q9X9Z8</accession>
<reference key="1">
    <citation type="journal article" date="2002" name="Nature">
        <title>Complete genome sequence of the model actinomycete Streptomyces coelicolor A3(2).</title>
        <authorList>
            <person name="Bentley S.D."/>
            <person name="Chater K.F."/>
            <person name="Cerdeno-Tarraga A.-M."/>
            <person name="Challis G.L."/>
            <person name="Thomson N.R."/>
            <person name="James K.D."/>
            <person name="Harris D.E."/>
            <person name="Quail M.A."/>
            <person name="Kieser H."/>
            <person name="Harper D."/>
            <person name="Bateman A."/>
            <person name="Brown S."/>
            <person name="Chandra G."/>
            <person name="Chen C.W."/>
            <person name="Collins M."/>
            <person name="Cronin A."/>
            <person name="Fraser A."/>
            <person name="Goble A."/>
            <person name="Hidalgo J."/>
            <person name="Hornsby T."/>
            <person name="Howarth S."/>
            <person name="Huang C.-H."/>
            <person name="Kieser T."/>
            <person name="Larke L."/>
            <person name="Murphy L.D."/>
            <person name="Oliver K."/>
            <person name="O'Neil S."/>
            <person name="Rabbinowitsch E."/>
            <person name="Rajandream M.A."/>
            <person name="Rutherford K.M."/>
            <person name="Rutter S."/>
            <person name="Seeger K."/>
            <person name="Saunders D."/>
            <person name="Sharp S."/>
            <person name="Squares R."/>
            <person name="Squares S."/>
            <person name="Taylor K."/>
            <person name="Warren T."/>
            <person name="Wietzorrek A."/>
            <person name="Woodward J.R."/>
            <person name="Barrell B.G."/>
            <person name="Parkhill J."/>
            <person name="Hopwood D.A."/>
        </authorList>
    </citation>
    <scope>NUCLEOTIDE SEQUENCE [LARGE SCALE GENOMIC DNA]</scope>
    <source>
        <strain>ATCC BAA-471 / A3(2) / M145</strain>
    </source>
</reference>
<name>Y1794_STRCO</name>
<evidence type="ECO:0000256" key="1">
    <source>
        <dbReference type="SAM" id="MobiDB-lite"/>
    </source>
</evidence>
<evidence type="ECO:0000305" key="2"/>